<feature type="initiator methionine" description="Removed" evidence="1">
    <location>
        <position position="1"/>
    </location>
</feature>
<feature type="chain" id="PRO_0000078470" description="Chaperone protein DnaK">
    <location>
        <begin position="2"/>
        <end position="620"/>
    </location>
</feature>
<feature type="region of interest" description="Disordered" evidence="2">
    <location>
        <begin position="597"/>
        <end position="620"/>
    </location>
</feature>
<feature type="modified residue" description="Phosphothreonine; by autocatalysis" evidence="1">
    <location>
        <position position="197"/>
    </location>
</feature>
<feature type="sequence conflict" description="In Ref. 2; AAB53800." evidence="3" ref="2">
    <original>IIAN</original>
    <variation>DLLRI</variation>
    <location>
        <begin position="26"/>
        <end position="29"/>
    </location>
</feature>
<feature type="sequence conflict" description="In Ref. 2; AAB53800." evidence="3" ref="2">
    <original>V</original>
    <variation>I</variation>
    <location>
        <position position="108"/>
    </location>
</feature>
<feature type="sequence conflict" description="In Ref. 2; AAB53800." evidence="3" ref="2">
    <original>K</original>
    <variation>Q</variation>
    <location>
        <position position="151"/>
    </location>
</feature>
<feature type="sequence conflict" description="In Ref. 2; AAB53800." evidence="3" ref="2">
    <original>E</original>
    <variation>D</variation>
    <location>
        <position position="155"/>
    </location>
</feature>
<feature type="sequence conflict" description="In Ref. 2; AAB53800." evidence="3" ref="2">
    <original>A</original>
    <variation>L</variation>
    <location>
        <position position="177"/>
    </location>
</feature>
<feature type="sequence conflict" description="In Ref. 2; AAB53800." evidence="3" ref="2">
    <original>MK</original>
    <variation>VE</variation>
    <location>
        <begin position="307"/>
        <end position="308"/>
    </location>
</feature>
<feature type="sequence conflict" description="In Ref. 2; AAB53800." evidence="3" ref="2">
    <original>S</original>
    <variation>G</variation>
    <location>
        <position position="316"/>
    </location>
</feature>
<feature type="sequence conflict" description="In Ref. 2; AAB53800." evidence="3" ref="2">
    <original>D</original>
    <variation>E</variation>
    <location>
        <position position="354"/>
    </location>
</feature>
<feature type="sequence conflict" description="In Ref. 2; AAB53800." evidence="3" ref="2">
    <original>S</original>
    <variation>SS</variation>
    <location>
        <position position="417"/>
    </location>
</feature>
<feature type="sequence conflict" description="In Ref. 2; AAB53800." evidence="3" ref="2">
    <original>VSIMVL</original>
    <variation>GVPYGF</variation>
    <location>
        <begin position="430"/>
        <end position="435"/>
    </location>
</feature>
<feature type="sequence conflict" description="In Ref. 2; AAB53800." evidence="3" ref="2">
    <original>SDSEIE</original>
    <variation>TIAK</variation>
    <location>
        <begin position="502"/>
        <end position="507"/>
    </location>
</feature>
<feature type="sequence conflict" description="In Ref. 2; AAB53800." evidence="3" ref="2">
    <original>K</original>
    <variation>R</variation>
    <location>
        <position position="522"/>
    </location>
</feature>
<feature type="sequence conflict" description="In Ref. 2; AAB53800." evidence="3" ref="2">
    <original>VKNDNATKAEL</original>
    <variation>IKTITLLKRI</variation>
    <location>
        <begin position="570"/>
        <end position="580"/>
    </location>
</feature>
<feature type="sequence conflict" description="In Ref. 2." evidence="3" ref="2">
    <original>LLAQAAQKLGEAMAN</original>
    <variation>ALKGSKIRRNGE</variation>
    <location>
        <begin position="586"/>
        <end position="600"/>
    </location>
</feature>
<sequence>MGKVIGIDLGTTNSAMAVYEGNEAKIIANKEGKNTTPSIVAFTDKGEILVGESAKRQAVTNPEKTIYSIKRIMGLMFNEDKAKEAEKRLPYKIVDRNGACAIEISGKVYTPQEISAKILMKLKEDAESYLGESVTEAVITVPAYFNDSQRKATKEAGTIAGLNVLRIINEPTSAALAYGLDKKESEKIMVYDLGGGTFDVTVLETGDNVVEVLATGGDAFLGGDDFDNRVIDFLASEFKSETGIEIKNDVMALQRLKEAAENAKKELSSAMETEINLPFITADATGPKHLVKKLTRAKFESLTEDLMKETISKIESVIKDAGLTKNEISEVVMVGGSTRIPKVQERVKAFINKDLNKSVNPDEVVAVGASIQGGVLKGDVKDVLLLDVTPLSLGIETLGGVMTKVIDRGTTIPAKKSQVFSTAEDNQPAVSIMVLQGERELARDNKSLGKFDLQGIAPAPRGVPQIEVTFDIDANGILTVSAQDKNTGKSQEIKISGSSGLSDSEIEKMVKDAELHKEEDAKKKEVIEARNHADSLAHQTQKSLDEHKTNLNENDANEIQNAINALKDCVKNDNATKAELEDKTKLLAQAAQKLGEAMANKNNAEQPKKKDDDVIDAEVE</sequence>
<comment type="function">
    <text evidence="1">Acts as a chaperone.</text>
</comment>
<comment type="induction">
    <text evidence="1">By stress conditions e.g. heat shock (By similarity).</text>
</comment>
<comment type="similarity">
    <text evidence="3">Belongs to the heat shock protein 70 family.</text>
</comment>
<name>DNAK_HELPY</name>
<gene>
    <name type="primary">dnaK</name>
    <name type="ordered locus">HP_0109</name>
</gene>
<protein>
    <recommendedName>
        <fullName>Chaperone protein DnaK</fullName>
    </recommendedName>
    <alternativeName>
        <fullName>HSP70</fullName>
    </alternativeName>
    <alternativeName>
        <fullName>Heat shock 70 kDa protein</fullName>
    </alternativeName>
    <alternativeName>
        <fullName>Heat shock protein 70</fullName>
    </alternativeName>
</protein>
<organism>
    <name type="scientific">Helicobacter pylori (strain ATCC 700392 / 26695)</name>
    <name type="common">Campylobacter pylori</name>
    <dbReference type="NCBI Taxonomy" id="85962"/>
    <lineage>
        <taxon>Bacteria</taxon>
        <taxon>Pseudomonadati</taxon>
        <taxon>Campylobacterota</taxon>
        <taxon>Epsilonproteobacteria</taxon>
        <taxon>Campylobacterales</taxon>
        <taxon>Helicobacteraceae</taxon>
        <taxon>Helicobacter</taxon>
    </lineage>
</organism>
<proteinExistence type="inferred from homology"/>
<dbReference type="EMBL" id="AE000511">
    <property type="protein sequence ID" value="AAD07178.1"/>
    <property type="molecule type" value="Genomic_DNA"/>
</dbReference>
<dbReference type="EMBL" id="U96271">
    <property type="protein sequence ID" value="AAB53800.1"/>
    <property type="molecule type" value="Genomic_DNA"/>
</dbReference>
<dbReference type="PIR" id="E64533">
    <property type="entry name" value="E64533"/>
</dbReference>
<dbReference type="RefSeq" id="NP_206909.1">
    <property type="nucleotide sequence ID" value="NC_000915.1"/>
</dbReference>
<dbReference type="RefSeq" id="WP_000521014.1">
    <property type="nucleotide sequence ID" value="NC_018939.1"/>
</dbReference>
<dbReference type="SMR" id="P55994"/>
<dbReference type="DIP" id="DIP-3190N"/>
<dbReference type="FunCoup" id="P55994">
    <property type="interactions" value="422"/>
</dbReference>
<dbReference type="IntAct" id="P55994">
    <property type="interactions" value="9"/>
</dbReference>
<dbReference type="MINT" id="P55994"/>
<dbReference type="STRING" id="85962.HP_0109"/>
<dbReference type="PaxDb" id="85962-C694_00540"/>
<dbReference type="EnsemblBacteria" id="AAD07178">
    <property type="protein sequence ID" value="AAD07178"/>
    <property type="gene ID" value="HP_0109"/>
</dbReference>
<dbReference type="KEGG" id="heo:C694_00540"/>
<dbReference type="KEGG" id="hpy:HP_0109"/>
<dbReference type="PATRIC" id="fig|85962.47.peg.118"/>
<dbReference type="eggNOG" id="COG0443">
    <property type="taxonomic scope" value="Bacteria"/>
</dbReference>
<dbReference type="InParanoid" id="P55994"/>
<dbReference type="OrthoDB" id="9766019at2"/>
<dbReference type="PhylomeDB" id="P55994"/>
<dbReference type="Proteomes" id="UP000000429">
    <property type="component" value="Chromosome"/>
</dbReference>
<dbReference type="GO" id="GO:0005829">
    <property type="term" value="C:cytosol"/>
    <property type="evidence" value="ECO:0000318"/>
    <property type="project" value="GO_Central"/>
</dbReference>
<dbReference type="GO" id="GO:0005524">
    <property type="term" value="F:ATP binding"/>
    <property type="evidence" value="ECO:0007669"/>
    <property type="project" value="UniProtKB-UniRule"/>
</dbReference>
<dbReference type="GO" id="GO:0016887">
    <property type="term" value="F:ATP hydrolysis activity"/>
    <property type="evidence" value="ECO:0000318"/>
    <property type="project" value="GO_Central"/>
</dbReference>
<dbReference type="GO" id="GO:0140662">
    <property type="term" value="F:ATP-dependent protein folding chaperone"/>
    <property type="evidence" value="ECO:0007669"/>
    <property type="project" value="InterPro"/>
</dbReference>
<dbReference type="GO" id="GO:0031072">
    <property type="term" value="F:heat shock protein binding"/>
    <property type="evidence" value="ECO:0000318"/>
    <property type="project" value="GO_Central"/>
</dbReference>
<dbReference type="GO" id="GO:0044183">
    <property type="term" value="F:protein folding chaperone"/>
    <property type="evidence" value="ECO:0000318"/>
    <property type="project" value="GO_Central"/>
</dbReference>
<dbReference type="GO" id="GO:0051082">
    <property type="term" value="F:unfolded protein binding"/>
    <property type="evidence" value="ECO:0007669"/>
    <property type="project" value="InterPro"/>
</dbReference>
<dbReference type="GO" id="GO:0051085">
    <property type="term" value="P:chaperone cofactor-dependent protein refolding"/>
    <property type="evidence" value="ECO:0000318"/>
    <property type="project" value="GO_Central"/>
</dbReference>
<dbReference type="GO" id="GO:0042026">
    <property type="term" value="P:protein refolding"/>
    <property type="evidence" value="ECO:0000318"/>
    <property type="project" value="GO_Central"/>
</dbReference>
<dbReference type="CDD" id="cd10234">
    <property type="entry name" value="ASKHA_NBD_HSP70_DnaK-like"/>
    <property type="match status" value="1"/>
</dbReference>
<dbReference type="FunFam" id="2.60.34.10:FF:000014">
    <property type="entry name" value="Chaperone protein DnaK HSP70"/>
    <property type="match status" value="1"/>
</dbReference>
<dbReference type="FunFam" id="1.20.1270.10:FF:000001">
    <property type="entry name" value="Molecular chaperone DnaK"/>
    <property type="match status" value="1"/>
</dbReference>
<dbReference type="FunFam" id="3.30.420.40:FF:000004">
    <property type="entry name" value="Molecular chaperone DnaK"/>
    <property type="match status" value="1"/>
</dbReference>
<dbReference type="FunFam" id="3.90.640.10:FF:000003">
    <property type="entry name" value="Molecular chaperone DnaK"/>
    <property type="match status" value="1"/>
</dbReference>
<dbReference type="Gene3D" id="1.20.1270.10">
    <property type="match status" value="1"/>
</dbReference>
<dbReference type="Gene3D" id="3.30.420.40">
    <property type="match status" value="2"/>
</dbReference>
<dbReference type="Gene3D" id="3.90.640.10">
    <property type="entry name" value="Actin, Chain A, domain 4"/>
    <property type="match status" value="1"/>
</dbReference>
<dbReference type="Gene3D" id="2.60.34.10">
    <property type="entry name" value="Substrate Binding Domain Of DNAk, Chain A, domain 1"/>
    <property type="match status" value="1"/>
</dbReference>
<dbReference type="HAMAP" id="MF_00332">
    <property type="entry name" value="DnaK"/>
    <property type="match status" value="1"/>
</dbReference>
<dbReference type="InterPro" id="IPR043129">
    <property type="entry name" value="ATPase_NBD"/>
</dbReference>
<dbReference type="InterPro" id="IPR012725">
    <property type="entry name" value="Chaperone_DnaK"/>
</dbReference>
<dbReference type="InterPro" id="IPR018181">
    <property type="entry name" value="Heat_shock_70_CS"/>
</dbReference>
<dbReference type="InterPro" id="IPR029048">
    <property type="entry name" value="HSP70_C_sf"/>
</dbReference>
<dbReference type="InterPro" id="IPR029047">
    <property type="entry name" value="HSP70_peptide-bd_sf"/>
</dbReference>
<dbReference type="InterPro" id="IPR013126">
    <property type="entry name" value="Hsp_70_fam"/>
</dbReference>
<dbReference type="NCBIfam" id="NF001413">
    <property type="entry name" value="PRK00290.1"/>
    <property type="match status" value="1"/>
</dbReference>
<dbReference type="NCBIfam" id="NF003520">
    <property type="entry name" value="PRK05183.1"/>
    <property type="match status" value="1"/>
</dbReference>
<dbReference type="NCBIfam" id="TIGR02350">
    <property type="entry name" value="prok_dnaK"/>
    <property type="match status" value="1"/>
</dbReference>
<dbReference type="PANTHER" id="PTHR19375">
    <property type="entry name" value="HEAT SHOCK PROTEIN 70KDA"/>
    <property type="match status" value="1"/>
</dbReference>
<dbReference type="Pfam" id="PF00012">
    <property type="entry name" value="HSP70"/>
    <property type="match status" value="1"/>
</dbReference>
<dbReference type="PRINTS" id="PR00301">
    <property type="entry name" value="HEATSHOCK70"/>
</dbReference>
<dbReference type="SUPFAM" id="SSF53067">
    <property type="entry name" value="Actin-like ATPase domain"/>
    <property type="match status" value="2"/>
</dbReference>
<dbReference type="SUPFAM" id="SSF100934">
    <property type="entry name" value="Heat shock protein 70kD (HSP70), C-terminal subdomain"/>
    <property type="match status" value="1"/>
</dbReference>
<dbReference type="SUPFAM" id="SSF100920">
    <property type="entry name" value="Heat shock protein 70kD (HSP70), peptide-binding domain"/>
    <property type="match status" value="1"/>
</dbReference>
<dbReference type="PROSITE" id="PS00297">
    <property type="entry name" value="HSP70_1"/>
    <property type="match status" value="1"/>
</dbReference>
<dbReference type="PROSITE" id="PS00329">
    <property type="entry name" value="HSP70_2"/>
    <property type="match status" value="1"/>
</dbReference>
<dbReference type="PROSITE" id="PS01036">
    <property type="entry name" value="HSP70_3"/>
    <property type="match status" value="1"/>
</dbReference>
<evidence type="ECO:0000250" key="1"/>
<evidence type="ECO:0000256" key="2">
    <source>
        <dbReference type="SAM" id="MobiDB-lite"/>
    </source>
</evidence>
<evidence type="ECO:0000305" key="3"/>
<accession>P55994</accession>
<accession>O05733</accession>
<keyword id="KW-0067">ATP-binding</keyword>
<keyword id="KW-0143">Chaperone</keyword>
<keyword id="KW-0547">Nucleotide-binding</keyword>
<keyword id="KW-0597">Phosphoprotein</keyword>
<keyword id="KW-1185">Reference proteome</keyword>
<keyword id="KW-0346">Stress response</keyword>
<reference key="1">
    <citation type="journal article" date="1997" name="Nature">
        <title>The complete genome sequence of the gastric pathogen Helicobacter pylori.</title>
        <authorList>
            <person name="Tomb J.-F."/>
            <person name="White O."/>
            <person name="Kerlavage A.R."/>
            <person name="Clayton R.A."/>
            <person name="Sutton G.G."/>
            <person name="Fleischmann R.D."/>
            <person name="Ketchum K.A."/>
            <person name="Klenk H.-P."/>
            <person name="Gill S.R."/>
            <person name="Dougherty B.A."/>
            <person name="Nelson K.E."/>
            <person name="Quackenbush J."/>
            <person name="Zhou L."/>
            <person name="Kirkness E.F."/>
            <person name="Peterson S.N."/>
            <person name="Loftus B.J."/>
            <person name="Richardson D.L."/>
            <person name="Dodson R.J."/>
            <person name="Khalak H.G."/>
            <person name="Glodek A."/>
            <person name="McKenney K."/>
            <person name="FitzGerald L.M."/>
            <person name="Lee N."/>
            <person name="Adams M.D."/>
            <person name="Hickey E.K."/>
            <person name="Berg D.E."/>
            <person name="Gocayne J.D."/>
            <person name="Utterback T.R."/>
            <person name="Peterson J.D."/>
            <person name="Kelley J.M."/>
            <person name="Cotton M.D."/>
            <person name="Weidman J.F."/>
            <person name="Fujii C."/>
            <person name="Bowman C."/>
            <person name="Watthey L."/>
            <person name="Wallin E."/>
            <person name="Hayes W.S."/>
            <person name="Borodovsky M."/>
            <person name="Karp P.D."/>
            <person name="Smith H.O."/>
            <person name="Fraser C.M."/>
            <person name="Venter J.C."/>
        </authorList>
    </citation>
    <scope>NUCLEOTIDE SEQUENCE [LARGE SCALE GENOMIC DNA]</scope>
    <source>
        <strain>ATCC 700392 / 26695</strain>
    </source>
</reference>
<reference key="2">
    <citation type="journal article" date="1998" name="Infect. Immun.">
        <title>Characterization of an acidic-pH-inducible stress protein (hsp70), a putative sulfatide binding adhesin, from Helicobacter pylori.</title>
        <authorList>
            <person name="Huesca M."/>
            <person name="Goodwin A."/>
            <person name="Bhagwansingh A."/>
            <person name="Hoffman P."/>
            <person name="Lingwood C.A."/>
        </authorList>
    </citation>
    <scope>NUCLEOTIDE SEQUENCE [GENOMIC DNA]</scope>
</reference>